<name>PRTGA_DANRE</name>
<feature type="signal peptide" evidence="1">
    <location>
        <begin position="1"/>
        <end position="23"/>
    </location>
</feature>
<feature type="chain" id="PRO_5000141193" description="Protogenin A" evidence="1">
    <location>
        <begin position="24"/>
        <end position="1149"/>
    </location>
</feature>
<feature type="topological domain" description="Extracellular" evidence="1">
    <location>
        <begin position="24"/>
        <end position="932"/>
    </location>
</feature>
<feature type="transmembrane region" description="Helical" evidence="1">
    <location>
        <begin position="933"/>
        <end position="953"/>
    </location>
</feature>
<feature type="topological domain" description="Cytoplasmic" evidence="1">
    <location>
        <begin position="954"/>
        <end position="1149"/>
    </location>
</feature>
<feature type="domain" description="Ig-like 1" evidence="1">
    <location>
        <begin position="27"/>
        <end position="117"/>
    </location>
</feature>
<feature type="domain" description="Ig-like 2" evidence="1">
    <location>
        <begin position="122"/>
        <end position="209"/>
    </location>
</feature>
<feature type="domain" description="Ig-like 3" evidence="1">
    <location>
        <begin position="222"/>
        <end position="309"/>
    </location>
</feature>
<feature type="domain" description="Ig-like 4" evidence="1">
    <location>
        <begin position="314"/>
        <end position="399"/>
    </location>
</feature>
<feature type="domain" description="Fibronectin type-III 1" evidence="3">
    <location>
        <begin position="408"/>
        <end position="502"/>
    </location>
</feature>
<feature type="domain" description="Fibronectin type-III 2" evidence="3">
    <location>
        <begin position="504"/>
        <end position="600"/>
    </location>
</feature>
<feature type="domain" description="Fibronectin type-III 3" evidence="3">
    <location>
        <begin position="605"/>
        <end position="704"/>
    </location>
</feature>
<feature type="domain" description="Fibronectin type-III 4" evidence="3">
    <location>
        <begin position="711"/>
        <end position="804"/>
    </location>
</feature>
<feature type="domain" description="Fibronectin type-III 5" evidence="3">
    <location>
        <begin position="809"/>
        <end position="905"/>
    </location>
</feature>
<feature type="region of interest" description="Disordered" evidence="4">
    <location>
        <begin position="646"/>
        <end position="666"/>
    </location>
</feature>
<feature type="region of interest" description="Disordered" evidence="4">
    <location>
        <begin position="1060"/>
        <end position="1149"/>
    </location>
</feature>
<feature type="compositionally biased region" description="Polar residues" evidence="4">
    <location>
        <begin position="1061"/>
        <end position="1073"/>
    </location>
</feature>
<feature type="compositionally biased region" description="Basic and acidic residues" evidence="4">
    <location>
        <begin position="1084"/>
        <end position="1106"/>
    </location>
</feature>
<feature type="glycosylation site" description="N-linked (GlcNAc...) asparagine" evidence="1">
    <location>
        <position position="78"/>
    </location>
</feature>
<feature type="glycosylation site" description="N-linked (GlcNAc...) asparagine" evidence="1">
    <location>
        <position position="230"/>
    </location>
</feature>
<feature type="glycosylation site" description="N-linked (GlcNAc...) asparagine" evidence="1">
    <location>
        <position position="300"/>
    </location>
</feature>
<feature type="glycosylation site" description="N-linked (GlcNAc...) asparagine" evidence="1">
    <location>
        <position position="307"/>
    </location>
</feature>
<feature type="glycosylation site" description="N-linked (GlcNAc...) asparagine" evidence="1">
    <location>
        <position position="460"/>
    </location>
</feature>
<feature type="glycosylation site" description="N-linked (GlcNAc...) asparagine" evidence="1">
    <location>
        <position position="475"/>
    </location>
</feature>
<feature type="glycosylation site" description="N-linked (GlcNAc...) asparagine" evidence="1">
    <location>
        <position position="617"/>
    </location>
</feature>
<feature type="glycosylation site" description="N-linked (GlcNAc...) asparagine" evidence="1">
    <location>
        <position position="720"/>
    </location>
</feature>
<feature type="glycosylation site" description="N-linked (GlcNAc...) asparagine" evidence="1">
    <location>
        <position position="741"/>
    </location>
</feature>
<feature type="glycosylation site" description="N-linked (GlcNAc...) asparagine" evidence="1">
    <location>
        <position position="753"/>
    </location>
</feature>
<feature type="disulfide bond" evidence="2">
    <location>
        <begin position="48"/>
        <end position="100"/>
    </location>
</feature>
<feature type="disulfide bond" evidence="2">
    <location>
        <begin position="143"/>
        <end position="192"/>
    </location>
</feature>
<feature type="disulfide bond" evidence="2">
    <location>
        <begin position="243"/>
        <end position="291"/>
    </location>
</feature>
<feature type="disulfide bond" evidence="2">
    <location>
        <begin position="335"/>
        <end position="382"/>
    </location>
</feature>
<keyword id="KW-0217">Developmental protein</keyword>
<keyword id="KW-1015">Disulfide bond</keyword>
<keyword id="KW-0325">Glycoprotein</keyword>
<keyword id="KW-0393">Immunoglobulin domain</keyword>
<keyword id="KW-0472">Membrane</keyword>
<keyword id="KW-1185">Reference proteome</keyword>
<keyword id="KW-0677">Repeat</keyword>
<keyword id="KW-0732">Signal</keyword>
<keyword id="KW-0812">Transmembrane</keyword>
<keyword id="KW-1133">Transmembrane helix</keyword>
<accession>Q2EY14</accession>
<sequence length="1149" mass="126296">MASFKRDLYLFLAVFLSISGVWSFSELFFIKEPHDVTAMRRDAVVLDCQAHGEAPIGIRWLKNGVTITESERVYSLSNGSLLISEVESRKDKSDEGFYQCLAQNKYGSILSQRARLTIASLSTFTQQPASIIVMEGSVARFTCKITATPPPIITWEFNRVTLPLATERITVLPSGVLQIQGVEQRDAGSYRCVAANIVSRRRSTEATLTVTPAMSPRAPQRPRIIAGPQNLTVPAHSTALLECMASGNPRPLISWSRADHKSIDVHKTKVLGNGNLIISDVNPQHAGIYFCRATTPGTRNYTIAAANITVLAPPSLVEWPESVTRPRAGTARFVCTAEGFPTPQITWLKNGEPVRSNGRIKMYNSKLVINQIIPEDDGIYQCEAENIQGSVLAMARLIVVMSDNRPSAPRNIRADTVSSSAIVLAWDRPAYNSEKVIAYSVHYMKAEGLNNEEYQIVIGNDTTRYIIDDLEAGRNYTFYIVAYMPMGASRMSDHVIQHTLEDVPLRAPELSLTSRSPSDIQVSWQPLSHKLSRGRVSAYRLSYRTSSDGTLTQLELSAHKTHQLLEGLQPDTTYLLRIAAATAVGWGEPSAWSSHRTPKASSTKVPLAPELQLESLNCTTVTLRWHLPAGSSSGLQGFKLSYHEEGQSEAAQAQIPPHHRQHTIGGLDPRKKYHIKLLAFSFMGDGYQADQTISTPGCVSVRDRLVPPPPPPHHVYAHSNSSSSVFLHWARPAFTSAQTLNYTVRCNPVGLQNASLVLYLQTAAQSLLVTDLEPNTNYEFAVRLHVDLLSSPWSPVVYQTTLPEAPSRAPVGVKVTLIEGDSALVSWKAPDDRSAAAVTHYTVLYATRRAWAAGDWQMLQREGSITMALLENLQPGQVYLVQVSASNQMGDGPFSAAVELTIHTDGHAHRTHGFSHATVFSDGFYHLDQRSMAGIAVGVCIALTCIIICILILACRSKTRKSCTTKSIRQAGGQTPPTAVRLANESAAESVEVMMPMMRDHFIDAKGGTNLIINSYGPVKPNIEKKRRKRWSFFKKNEKEVKKVSSPAYSYHPGTTLLCYTETSPENPPTTLQGLFGPSGGDSEGSHSSEGSHETSDSGRYSHDDTEATNVSIRSRPASLQDDGNQTPVHEKQLETTLQEQEMTDLHPV</sequence>
<comment type="function">
    <text evidence="5">May play a role in anteroposterior axis elongation.</text>
</comment>
<comment type="subcellular location">
    <subcellularLocation>
        <location evidence="1">Membrane</location>
        <topology evidence="1">Single-pass membrane protein</topology>
    </subcellularLocation>
</comment>
<comment type="tissue specificity">
    <text evidence="5">Expression begins in the posterior region of the embryo and this posterior restriction persists at the 4 s stage. At early somite stages, expressed along the neural tube with lower levels in the lateral and paraxial mesoderm. Expression decreases caudally and rostrally becomes restricted to the ventral part of the brain. Widespread in the spinal cord at 30 hours post-fertilization (hpf) and is also expressed in the lens from this time. At 40 hpf, expression is restricted to the lens.</text>
</comment>
<comment type="developmental stage">
    <text evidence="5">Expression begins at 80% epiboly and is extinguished by 48 hours post-fertilization.</text>
</comment>
<comment type="similarity">
    <text evidence="1">Belongs to the immunoglobulin superfamily. DCC family.</text>
</comment>
<gene>
    <name evidence="8" type="primary">prtga</name>
</gene>
<proteinExistence type="evidence at transcript level"/>
<organism>
    <name type="scientific">Danio rerio</name>
    <name type="common">Zebrafish</name>
    <name type="synonym">Brachydanio rerio</name>
    <dbReference type="NCBI Taxonomy" id="7955"/>
    <lineage>
        <taxon>Eukaryota</taxon>
        <taxon>Metazoa</taxon>
        <taxon>Chordata</taxon>
        <taxon>Craniata</taxon>
        <taxon>Vertebrata</taxon>
        <taxon>Euteleostomi</taxon>
        <taxon>Actinopterygii</taxon>
        <taxon>Neopterygii</taxon>
        <taxon>Teleostei</taxon>
        <taxon>Ostariophysi</taxon>
        <taxon>Cypriniformes</taxon>
        <taxon>Danionidae</taxon>
        <taxon>Danioninae</taxon>
        <taxon>Danio</taxon>
    </lineage>
</organism>
<evidence type="ECO:0000255" key="1"/>
<evidence type="ECO:0000255" key="2">
    <source>
        <dbReference type="PROSITE-ProRule" id="PRU00114"/>
    </source>
</evidence>
<evidence type="ECO:0000255" key="3">
    <source>
        <dbReference type="PROSITE-ProRule" id="PRU00316"/>
    </source>
</evidence>
<evidence type="ECO:0000256" key="4">
    <source>
        <dbReference type="SAM" id="MobiDB-lite"/>
    </source>
</evidence>
<evidence type="ECO:0000269" key="5">
    <source>
    </source>
</evidence>
<evidence type="ECO:0000305" key="6"/>
<evidence type="ECO:0000312" key="7">
    <source>
        <dbReference type="EMBL" id="ABC96182.1"/>
    </source>
</evidence>
<evidence type="ECO:0000312" key="8">
    <source>
        <dbReference type="ZFIN" id="ZDB-GENE-061204-4"/>
    </source>
</evidence>
<dbReference type="EMBL" id="DQ360115">
    <property type="protein sequence ID" value="ABC96182.1"/>
    <property type="molecule type" value="mRNA"/>
</dbReference>
<dbReference type="RefSeq" id="NP_001038495.1">
    <property type="nucleotide sequence ID" value="NM_001045030.1"/>
</dbReference>
<dbReference type="SMR" id="Q2EY14"/>
<dbReference type="FunCoup" id="Q2EY14">
    <property type="interactions" value="284"/>
</dbReference>
<dbReference type="STRING" id="7955.ENSDARP00000151668"/>
<dbReference type="GlyCosmos" id="Q2EY14">
    <property type="glycosylation" value="10 sites, No reported glycans"/>
</dbReference>
<dbReference type="PeptideAtlas" id="Q2EY14"/>
<dbReference type="GeneID" id="563834"/>
<dbReference type="KEGG" id="dre:563834"/>
<dbReference type="AGR" id="ZFIN:ZDB-GENE-061204-4"/>
<dbReference type="CTD" id="563834"/>
<dbReference type="ZFIN" id="ZDB-GENE-061204-4">
    <property type="gene designation" value="prtga"/>
</dbReference>
<dbReference type="InParanoid" id="Q2EY14"/>
<dbReference type="OrthoDB" id="438268at2759"/>
<dbReference type="PhylomeDB" id="Q2EY14"/>
<dbReference type="PRO" id="PR:Q2EY14"/>
<dbReference type="Proteomes" id="UP000000437">
    <property type="component" value="Chromosome 18"/>
</dbReference>
<dbReference type="GO" id="GO:0016020">
    <property type="term" value="C:membrane"/>
    <property type="evidence" value="ECO:0007669"/>
    <property type="project" value="UniProtKB-SubCell"/>
</dbReference>
<dbReference type="GO" id="GO:0098609">
    <property type="term" value="P:cell-cell adhesion"/>
    <property type="evidence" value="ECO:0000318"/>
    <property type="project" value="GO_Central"/>
</dbReference>
<dbReference type="GO" id="GO:0050768">
    <property type="term" value="P:negative regulation of neurogenesis"/>
    <property type="evidence" value="ECO:0000315"/>
    <property type="project" value="MGI"/>
</dbReference>
<dbReference type="CDD" id="cd00063">
    <property type="entry name" value="FN3"/>
    <property type="match status" value="5"/>
</dbReference>
<dbReference type="CDD" id="cd05722">
    <property type="entry name" value="IgI_1_Neogenin_like"/>
    <property type="match status" value="1"/>
</dbReference>
<dbReference type="FunFam" id="2.60.40.10:FF:000600">
    <property type="entry name" value="Contactin 2"/>
    <property type="match status" value="1"/>
</dbReference>
<dbReference type="FunFam" id="2.60.40.10:FF:000930">
    <property type="entry name" value="immunoglobulin superfamily DCC subclass member 3"/>
    <property type="match status" value="1"/>
</dbReference>
<dbReference type="FunFam" id="2.60.40.10:FF:000828">
    <property type="entry name" value="Protogenin"/>
    <property type="match status" value="1"/>
</dbReference>
<dbReference type="FunFam" id="2.60.40.10:FF:000455">
    <property type="entry name" value="Protogenin A"/>
    <property type="match status" value="1"/>
</dbReference>
<dbReference type="FunFam" id="2.60.40.10:FF:000551">
    <property type="entry name" value="Protogenin A"/>
    <property type="match status" value="1"/>
</dbReference>
<dbReference type="FunFam" id="2.60.40.10:FF:000299">
    <property type="entry name" value="protogenin isoform X2"/>
    <property type="match status" value="1"/>
</dbReference>
<dbReference type="FunFam" id="2.60.40.10:FF:000456">
    <property type="entry name" value="protogenin isoform X2"/>
    <property type="match status" value="1"/>
</dbReference>
<dbReference type="Gene3D" id="2.60.40.10">
    <property type="entry name" value="Immunoglobulins"/>
    <property type="match status" value="9"/>
</dbReference>
<dbReference type="InterPro" id="IPR003961">
    <property type="entry name" value="FN3_dom"/>
</dbReference>
<dbReference type="InterPro" id="IPR036116">
    <property type="entry name" value="FN3_sf"/>
</dbReference>
<dbReference type="InterPro" id="IPR007110">
    <property type="entry name" value="Ig-like_dom"/>
</dbReference>
<dbReference type="InterPro" id="IPR036179">
    <property type="entry name" value="Ig-like_dom_sf"/>
</dbReference>
<dbReference type="InterPro" id="IPR013783">
    <property type="entry name" value="Ig-like_fold"/>
</dbReference>
<dbReference type="InterPro" id="IPR013098">
    <property type="entry name" value="Ig_I-set"/>
</dbReference>
<dbReference type="InterPro" id="IPR003599">
    <property type="entry name" value="Ig_sub"/>
</dbReference>
<dbReference type="InterPro" id="IPR003598">
    <property type="entry name" value="Ig_sub2"/>
</dbReference>
<dbReference type="PANTHER" id="PTHR44170">
    <property type="entry name" value="PROTEIN SIDEKICK"/>
    <property type="match status" value="1"/>
</dbReference>
<dbReference type="PANTHER" id="PTHR44170:SF47">
    <property type="entry name" value="PROTOGENIN"/>
    <property type="match status" value="1"/>
</dbReference>
<dbReference type="Pfam" id="PF00041">
    <property type="entry name" value="fn3"/>
    <property type="match status" value="5"/>
</dbReference>
<dbReference type="Pfam" id="PF07679">
    <property type="entry name" value="I-set"/>
    <property type="match status" value="3"/>
</dbReference>
<dbReference type="Pfam" id="PF13927">
    <property type="entry name" value="Ig_3"/>
    <property type="match status" value="1"/>
</dbReference>
<dbReference type="SMART" id="SM00060">
    <property type="entry name" value="FN3"/>
    <property type="match status" value="5"/>
</dbReference>
<dbReference type="SMART" id="SM00409">
    <property type="entry name" value="IG"/>
    <property type="match status" value="4"/>
</dbReference>
<dbReference type="SMART" id="SM00408">
    <property type="entry name" value="IGc2"/>
    <property type="match status" value="4"/>
</dbReference>
<dbReference type="SUPFAM" id="SSF49265">
    <property type="entry name" value="Fibronectin type III"/>
    <property type="match status" value="3"/>
</dbReference>
<dbReference type="SUPFAM" id="SSF48726">
    <property type="entry name" value="Immunoglobulin"/>
    <property type="match status" value="4"/>
</dbReference>
<dbReference type="PROSITE" id="PS50853">
    <property type="entry name" value="FN3"/>
    <property type="match status" value="5"/>
</dbReference>
<dbReference type="PROSITE" id="PS50835">
    <property type="entry name" value="IG_LIKE"/>
    <property type="match status" value="4"/>
</dbReference>
<protein>
    <recommendedName>
        <fullName>Protogenin A</fullName>
    </recommendedName>
</protein>
<reference evidence="6 7" key="1">
    <citation type="journal article" date="2006" name="Dev. Dyn.">
        <title>Cloning of vertebrate protogenin (Prtg) and comparative expression analysis during axis elongation.</title>
        <authorList>
            <person name="Vesque C."/>
            <person name="Anselme I."/>
            <person name="Couve E."/>
            <person name="Charnay P."/>
            <person name="Schneider-Maunoury S."/>
        </authorList>
    </citation>
    <scope>NUCLEOTIDE SEQUENCE [MRNA]</scope>
    <scope>TISSUE SPECIFICITY</scope>
    <scope>DEVELOPMENTAL STAGE</scope>
</reference>